<gene>
    <name evidence="1" type="primary">nadA</name>
    <name type="ordered locus">Bcen2424_2506</name>
</gene>
<feature type="chain" id="PRO_1000024942" description="Quinolinate synthase">
    <location>
        <begin position="1"/>
        <end position="378"/>
    </location>
</feature>
<feature type="binding site" evidence="1">
    <location>
        <position position="59"/>
    </location>
    <ligand>
        <name>iminosuccinate</name>
        <dbReference type="ChEBI" id="CHEBI:77875"/>
    </ligand>
</feature>
<feature type="binding site" evidence="1">
    <location>
        <position position="80"/>
    </location>
    <ligand>
        <name>iminosuccinate</name>
        <dbReference type="ChEBI" id="CHEBI:77875"/>
    </ligand>
</feature>
<feature type="binding site" evidence="1">
    <location>
        <position position="125"/>
    </location>
    <ligand>
        <name>[4Fe-4S] cluster</name>
        <dbReference type="ChEBI" id="CHEBI:49883"/>
    </ligand>
</feature>
<feature type="binding site" evidence="1">
    <location>
        <begin position="151"/>
        <end position="153"/>
    </location>
    <ligand>
        <name>iminosuccinate</name>
        <dbReference type="ChEBI" id="CHEBI:77875"/>
    </ligand>
</feature>
<feature type="binding site" evidence="1">
    <location>
        <position position="168"/>
    </location>
    <ligand>
        <name>iminosuccinate</name>
        <dbReference type="ChEBI" id="CHEBI:77875"/>
    </ligand>
</feature>
<feature type="binding site" evidence="1">
    <location>
        <position position="212"/>
    </location>
    <ligand>
        <name>[4Fe-4S] cluster</name>
        <dbReference type="ChEBI" id="CHEBI:49883"/>
    </ligand>
</feature>
<feature type="binding site" evidence="1">
    <location>
        <begin position="238"/>
        <end position="240"/>
    </location>
    <ligand>
        <name>iminosuccinate</name>
        <dbReference type="ChEBI" id="CHEBI:77875"/>
    </ligand>
</feature>
<feature type="binding site" evidence="1">
    <location>
        <position position="255"/>
    </location>
    <ligand>
        <name>iminosuccinate</name>
        <dbReference type="ChEBI" id="CHEBI:77875"/>
    </ligand>
</feature>
<feature type="binding site" evidence="1">
    <location>
        <position position="309"/>
    </location>
    <ligand>
        <name>[4Fe-4S] cluster</name>
        <dbReference type="ChEBI" id="CHEBI:49883"/>
    </ligand>
</feature>
<accession>A0K9S9</accession>
<keyword id="KW-0004">4Fe-4S</keyword>
<keyword id="KW-0963">Cytoplasm</keyword>
<keyword id="KW-0408">Iron</keyword>
<keyword id="KW-0411">Iron-sulfur</keyword>
<keyword id="KW-0479">Metal-binding</keyword>
<keyword id="KW-0662">Pyridine nucleotide biosynthesis</keyword>
<keyword id="KW-0808">Transferase</keyword>
<dbReference type="EC" id="2.5.1.72" evidence="1"/>
<dbReference type="EMBL" id="CP000458">
    <property type="protein sequence ID" value="ABK09256.1"/>
    <property type="molecule type" value="Genomic_DNA"/>
</dbReference>
<dbReference type="RefSeq" id="WP_006478043.1">
    <property type="nucleotide sequence ID" value="NC_008542.1"/>
</dbReference>
<dbReference type="SMR" id="A0K9S9"/>
<dbReference type="KEGG" id="bch:Bcen2424_2506"/>
<dbReference type="HOGENOM" id="CLU_047382_1_0_4"/>
<dbReference type="UniPathway" id="UPA00253">
    <property type="reaction ID" value="UER00327"/>
</dbReference>
<dbReference type="GO" id="GO:0005829">
    <property type="term" value="C:cytosol"/>
    <property type="evidence" value="ECO:0007669"/>
    <property type="project" value="TreeGrafter"/>
</dbReference>
<dbReference type="GO" id="GO:0051539">
    <property type="term" value="F:4 iron, 4 sulfur cluster binding"/>
    <property type="evidence" value="ECO:0007669"/>
    <property type="project" value="UniProtKB-KW"/>
</dbReference>
<dbReference type="GO" id="GO:0046872">
    <property type="term" value="F:metal ion binding"/>
    <property type="evidence" value="ECO:0007669"/>
    <property type="project" value="UniProtKB-KW"/>
</dbReference>
<dbReference type="GO" id="GO:0008987">
    <property type="term" value="F:quinolinate synthetase A activity"/>
    <property type="evidence" value="ECO:0007669"/>
    <property type="project" value="UniProtKB-UniRule"/>
</dbReference>
<dbReference type="GO" id="GO:0034628">
    <property type="term" value="P:'de novo' NAD biosynthetic process from L-aspartate"/>
    <property type="evidence" value="ECO:0007669"/>
    <property type="project" value="TreeGrafter"/>
</dbReference>
<dbReference type="FunFam" id="3.40.50.10800:FF:000001">
    <property type="entry name" value="Quinolinate synthase A"/>
    <property type="match status" value="1"/>
</dbReference>
<dbReference type="FunFam" id="3.40.50.10800:FF:000003">
    <property type="entry name" value="Quinolinate synthase A"/>
    <property type="match status" value="1"/>
</dbReference>
<dbReference type="Gene3D" id="3.40.50.10800">
    <property type="entry name" value="NadA-like"/>
    <property type="match status" value="3"/>
</dbReference>
<dbReference type="HAMAP" id="MF_00567">
    <property type="entry name" value="NadA_type1"/>
    <property type="match status" value="1"/>
</dbReference>
<dbReference type="InterPro" id="IPR003473">
    <property type="entry name" value="NadA"/>
</dbReference>
<dbReference type="InterPro" id="IPR036094">
    <property type="entry name" value="NadA_sf"/>
</dbReference>
<dbReference type="InterPro" id="IPR023513">
    <property type="entry name" value="Quinolinate_synth_A_type1"/>
</dbReference>
<dbReference type="NCBIfam" id="TIGR00550">
    <property type="entry name" value="nadA"/>
    <property type="match status" value="1"/>
</dbReference>
<dbReference type="NCBIfam" id="NF006877">
    <property type="entry name" value="PRK09375.1-1"/>
    <property type="match status" value="1"/>
</dbReference>
<dbReference type="NCBIfam" id="NF006878">
    <property type="entry name" value="PRK09375.1-2"/>
    <property type="match status" value="1"/>
</dbReference>
<dbReference type="PANTHER" id="PTHR30573:SF0">
    <property type="entry name" value="QUINOLINATE SYNTHASE, CHLOROPLASTIC"/>
    <property type="match status" value="1"/>
</dbReference>
<dbReference type="PANTHER" id="PTHR30573">
    <property type="entry name" value="QUINOLINATE SYNTHETASE A"/>
    <property type="match status" value="1"/>
</dbReference>
<dbReference type="Pfam" id="PF02445">
    <property type="entry name" value="NadA"/>
    <property type="match status" value="1"/>
</dbReference>
<dbReference type="SUPFAM" id="SSF142754">
    <property type="entry name" value="NadA-like"/>
    <property type="match status" value="1"/>
</dbReference>
<comment type="function">
    <text evidence="1">Catalyzes the condensation of iminoaspartate with dihydroxyacetone phosphate to form quinolinate.</text>
</comment>
<comment type="catalytic activity">
    <reaction evidence="1">
        <text>iminosuccinate + dihydroxyacetone phosphate = quinolinate + phosphate + 2 H2O + H(+)</text>
        <dbReference type="Rhea" id="RHEA:25888"/>
        <dbReference type="ChEBI" id="CHEBI:15377"/>
        <dbReference type="ChEBI" id="CHEBI:15378"/>
        <dbReference type="ChEBI" id="CHEBI:29959"/>
        <dbReference type="ChEBI" id="CHEBI:43474"/>
        <dbReference type="ChEBI" id="CHEBI:57642"/>
        <dbReference type="ChEBI" id="CHEBI:77875"/>
        <dbReference type="EC" id="2.5.1.72"/>
    </reaction>
    <physiologicalReaction direction="left-to-right" evidence="1">
        <dbReference type="Rhea" id="RHEA:25889"/>
    </physiologicalReaction>
</comment>
<comment type="cofactor">
    <cofactor evidence="1">
        <name>[4Fe-4S] cluster</name>
        <dbReference type="ChEBI" id="CHEBI:49883"/>
    </cofactor>
    <text evidence="1">Binds 1 [4Fe-4S] cluster per subunit.</text>
</comment>
<comment type="pathway">
    <text evidence="1">Cofactor biosynthesis; NAD(+) biosynthesis; quinolinate from iminoaspartate: step 1/1.</text>
</comment>
<comment type="subcellular location">
    <subcellularLocation>
        <location evidence="1">Cytoplasm</location>
    </subcellularLocation>
</comment>
<comment type="similarity">
    <text evidence="1">Belongs to the quinolinate synthase family. Type 1 subfamily.</text>
</comment>
<organism>
    <name type="scientific">Burkholderia cenocepacia (strain HI2424)</name>
    <dbReference type="NCBI Taxonomy" id="331272"/>
    <lineage>
        <taxon>Bacteria</taxon>
        <taxon>Pseudomonadati</taxon>
        <taxon>Pseudomonadota</taxon>
        <taxon>Betaproteobacteria</taxon>
        <taxon>Burkholderiales</taxon>
        <taxon>Burkholderiaceae</taxon>
        <taxon>Burkholderia</taxon>
        <taxon>Burkholderia cepacia complex</taxon>
    </lineage>
</organism>
<sequence length="378" mass="40752">MQSTIKPVEYDRPVAAGTVCGVGQAWAKVPDAPSAEERAALKARIKALLAREKAVLVAHYYVDAELQELADETGGCVADSLEMARFGRDHDAQTLIVAGVRFMGETAKILSPNKRILMPDLDATCSLDLGCPVDEFSAFCDAHPDRTVVVYANTSAAVKARADWMVTSSIGLEIVADLHARGEKIIWAPDRHLGSYIQKKTGADMLLWQGSCLVHDEFKGIELDLLRAEYPDAKVLVHPESPENVVAQADVVGSTTQLIDAAVKFDAKRFIVATDLGILHKMQLAAPGKTFIAAPTAGNSATCKSCAHCPWMAMNGLANLADVLERGHNEIFVDPAIGERARLPIDRMLEFAAAHKKRVQASGDLQRDQSLFANVGAA</sequence>
<evidence type="ECO:0000255" key="1">
    <source>
        <dbReference type="HAMAP-Rule" id="MF_00567"/>
    </source>
</evidence>
<protein>
    <recommendedName>
        <fullName evidence="1">Quinolinate synthase</fullName>
        <ecNumber evidence="1">2.5.1.72</ecNumber>
    </recommendedName>
</protein>
<name>NADA_BURCH</name>
<proteinExistence type="inferred from homology"/>
<reference key="1">
    <citation type="submission" date="2006-08" db="EMBL/GenBank/DDBJ databases">
        <title>Complete sequence of chromosome 1 of Burkholderia cenocepacia HI2424.</title>
        <authorList>
            <person name="Copeland A."/>
            <person name="Lucas S."/>
            <person name="Lapidus A."/>
            <person name="Barry K."/>
            <person name="Detter J.C."/>
            <person name="Glavina del Rio T."/>
            <person name="Hammon N."/>
            <person name="Israni S."/>
            <person name="Pitluck S."/>
            <person name="Chain P."/>
            <person name="Malfatti S."/>
            <person name="Shin M."/>
            <person name="Vergez L."/>
            <person name="Schmutz J."/>
            <person name="Larimer F."/>
            <person name="Land M."/>
            <person name="Hauser L."/>
            <person name="Kyrpides N."/>
            <person name="Kim E."/>
            <person name="LiPuma J.J."/>
            <person name="Gonzalez C.F."/>
            <person name="Konstantinidis K."/>
            <person name="Tiedje J.M."/>
            <person name="Richardson P."/>
        </authorList>
    </citation>
    <scope>NUCLEOTIDE SEQUENCE [LARGE SCALE GENOMIC DNA]</scope>
    <source>
        <strain>HI2424</strain>
    </source>
</reference>